<accession>A9A3J7</accession>
<gene>
    <name evidence="1" type="primary">rps10</name>
    <name type="ordered locus">Nmar_1033</name>
</gene>
<proteinExistence type="inferred from homology"/>
<organism>
    <name type="scientific">Nitrosopumilus maritimus (strain SCM1)</name>
    <dbReference type="NCBI Taxonomy" id="436308"/>
    <lineage>
        <taxon>Archaea</taxon>
        <taxon>Nitrososphaerota</taxon>
        <taxon>Nitrososphaeria</taxon>
        <taxon>Nitrosopumilales</taxon>
        <taxon>Nitrosopumilaceae</taxon>
        <taxon>Nitrosopumilus</taxon>
    </lineage>
</organism>
<protein>
    <recommendedName>
        <fullName evidence="1">Small ribosomal subunit protein uS10</fullName>
    </recommendedName>
    <alternativeName>
        <fullName evidence="2">30S ribosomal protein S10</fullName>
    </alternativeName>
</protein>
<keyword id="KW-1185">Reference proteome</keyword>
<keyword id="KW-0687">Ribonucleoprotein</keyword>
<keyword id="KW-0689">Ribosomal protein</keyword>
<reference key="1">
    <citation type="journal article" date="2010" name="Proc. Natl. Acad. Sci. U.S.A.">
        <title>Nitrosopumilus maritimus genome reveals unique mechanisms for nitrification and autotrophy in globally distributed marine crenarchaea.</title>
        <authorList>
            <person name="Walker C.B."/>
            <person name="de la Torre J.R."/>
            <person name="Klotz M.G."/>
            <person name="Urakawa H."/>
            <person name="Pinel N."/>
            <person name="Arp D.J."/>
            <person name="Brochier-Armanet C."/>
            <person name="Chain P.S."/>
            <person name="Chan P.P."/>
            <person name="Gollabgir A."/>
            <person name="Hemp J."/>
            <person name="Hugler M."/>
            <person name="Karr E.A."/>
            <person name="Konneke M."/>
            <person name="Shin M."/>
            <person name="Lawton T.J."/>
            <person name="Lowe T."/>
            <person name="Martens-Habbena W."/>
            <person name="Sayavedra-Soto L.A."/>
            <person name="Lang D."/>
            <person name="Sievert S.M."/>
            <person name="Rosenzweig A.C."/>
            <person name="Manning G."/>
            <person name="Stahl D.A."/>
        </authorList>
    </citation>
    <scope>NUCLEOTIDE SEQUENCE [LARGE SCALE GENOMIC DNA]</scope>
    <source>
        <strain>SCM1</strain>
    </source>
</reference>
<evidence type="ECO:0000255" key="1">
    <source>
        <dbReference type="HAMAP-Rule" id="MF_00508"/>
    </source>
</evidence>
<evidence type="ECO:0000305" key="2"/>
<comment type="function">
    <text evidence="1">Involved in the binding of tRNA to the ribosomes.</text>
</comment>
<comment type="subunit">
    <text evidence="1">Part of the 30S ribosomal subunit.</text>
</comment>
<comment type="similarity">
    <text evidence="1">Belongs to the universal ribosomal protein uS10 family.</text>
</comment>
<name>RS10_NITMS</name>
<sequence length="102" mass="11419">MTQTARVKLTSTSLPKLDGVCGEIMGIGKKTGVKVKGPTPLPVKRLHVATRKSPCGNGTETYEKWEMKMHRRIININADDKAIRQLMRLKIPDDVYIELSLT</sequence>
<dbReference type="EMBL" id="CP000866">
    <property type="protein sequence ID" value="ABX12929.1"/>
    <property type="molecule type" value="Genomic_DNA"/>
</dbReference>
<dbReference type="SMR" id="A9A3J7"/>
<dbReference type="FunCoup" id="A9A3J7">
    <property type="interactions" value="172"/>
</dbReference>
<dbReference type="STRING" id="436308.Nmar_1033"/>
<dbReference type="EnsemblBacteria" id="ABX12929">
    <property type="protein sequence ID" value="ABX12929"/>
    <property type="gene ID" value="Nmar_1033"/>
</dbReference>
<dbReference type="KEGG" id="nmr:Nmar_1033"/>
<dbReference type="eggNOG" id="arCOG01758">
    <property type="taxonomic scope" value="Archaea"/>
</dbReference>
<dbReference type="HOGENOM" id="CLU_122625_0_1_2"/>
<dbReference type="InParanoid" id="A9A3J7"/>
<dbReference type="OrthoDB" id="371736at2157"/>
<dbReference type="PhylomeDB" id="A9A3J7"/>
<dbReference type="Proteomes" id="UP000000792">
    <property type="component" value="Chromosome"/>
</dbReference>
<dbReference type="GO" id="GO:0022627">
    <property type="term" value="C:cytosolic small ribosomal subunit"/>
    <property type="evidence" value="ECO:0000318"/>
    <property type="project" value="GO_Central"/>
</dbReference>
<dbReference type="GO" id="GO:0003735">
    <property type="term" value="F:structural constituent of ribosome"/>
    <property type="evidence" value="ECO:0000318"/>
    <property type="project" value="GO_Central"/>
</dbReference>
<dbReference type="GO" id="GO:0000049">
    <property type="term" value="F:tRNA binding"/>
    <property type="evidence" value="ECO:0007669"/>
    <property type="project" value="UniProtKB-UniRule"/>
</dbReference>
<dbReference type="GO" id="GO:0006412">
    <property type="term" value="P:translation"/>
    <property type="evidence" value="ECO:0007669"/>
    <property type="project" value="UniProtKB-UniRule"/>
</dbReference>
<dbReference type="FunFam" id="3.30.70.600:FF:000004">
    <property type="entry name" value="30S ribosomal protein S10"/>
    <property type="match status" value="1"/>
</dbReference>
<dbReference type="Gene3D" id="3.30.70.600">
    <property type="entry name" value="Ribosomal protein S10 domain"/>
    <property type="match status" value="1"/>
</dbReference>
<dbReference type="HAMAP" id="MF_00508">
    <property type="entry name" value="Ribosomal_uS10"/>
    <property type="match status" value="1"/>
</dbReference>
<dbReference type="InterPro" id="IPR001848">
    <property type="entry name" value="Ribosomal_uS10"/>
</dbReference>
<dbReference type="InterPro" id="IPR027486">
    <property type="entry name" value="Ribosomal_uS10_dom"/>
</dbReference>
<dbReference type="InterPro" id="IPR036838">
    <property type="entry name" value="Ribosomal_uS10_dom_sf"/>
</dbReference>
<dbReference type="InterPro" id="IPR005729">
    <property type="entry name" value="Ribosomal_uS10_euk/arc"/>
</dbReference>
<dbReference type="NCBIfam" id="TIGR01046">
    <property type="entry name" value="uS10_euk_arch"/>
    <property type="match status" value="1"/>
</dbReference>
<dbReference type="PANTHER" id="PTHR11700">
    <property type="entry name" value="30S RIBOSOMAL PROTEIN S10 FAMILY MEMBER"/>
    <property type="match status" value="1"/>
</dbReference>
<dbReference type="Pfam" id="PF00338">
    <property type="entry name" value="Ribosomal_S10"/>
    <property type="match status" value="1"/>
</dbReference>
<dbReference type="PRINTS" id="PR00971">
    <property type="entry name" value="RIBOSOMALS10"/>
</dbReference>
<dbReference type="SMART" id="SM01403">
    <property type="entry name" value="Ribosomal_S10"/>
    <property type="match status" value="1"/>
</dbReference>
<dbReference type="SUPFAM" id="SSF54999">
    <property type="entry name" value="Ribosomal protein S10"/>
    <property type="match status" value="1"/>
</dbReference>
<feature type="chain" id="PRO_1000127157" description="Small ribosomal subunit protein uS10">
    <location>
        <begin position="1"/>
        <end position="102"/>
    </location>
</feature>